<protein>
    <recommendedName>
        <fullName evidence="2">Small ribosomal subunit protein uS12</fullName>
    </recommendedName>
    <alternativeName>
        <fullName evidence="4">30S ribosomal protein S12</fullName>
    </alternativeName>
</protein>
<feature type="chain" id="PRO_1000205906" description="Small ribosomal subunit protein uS12">
    <location>
        <begin position="1"/>
        <end position="124"/>
    </location>
</feature>
<feature type="region of interest" description="Disordered" evidence="3">
    <location>
        <begin position="1"/>
        <end position="32"/>
    </location>
</feature>
<feature type="region of interest" description="Disordered" evidence="3">
    <location>
        <begin position="105"/>
        <end position="124"/>
    </location>
</feature>
<feature type="compositionally biased region" description="Basic residues" evidence="3">
    <location>
        <begin position="111"/>
        <end position="124"/>
    </location>
</feature>
<feature type="modified residue" description="3-methylthioaspartic acid" evidence="1">
    <location>
        <position position="89"/>
    </location>
</feature>
<sequence length="124" mass="13774">MPTIQQLVRKGRKDKATKTKTPALKGSPQRRGVCTRVYTTTPRKPNSALRKVARVKLSSQMEVTAYIPGVGHNLQEHSIVLVRGGRVADLPGVRYKIVRGALDTQGVRGRQQARSRYGAKKEKK</sequence>
<accession>C5C0J6</accession>
<proteinExistence type="inferred from homology"/>
<dbReference type="EMBL" id="CP001618">
    <property type="protein sequence ID" value="ACQ81392.1"/>
    <property type="molecule type" value="Genomic_DNA"/>
</dbReference>
<dbReference type="RefSeq" id="WP_015883632.1">
    <property type="nucleotide sequence ID" value="NC_012669.1"/>
</dbReference>
<dbReference type="SMR" id="C5C0J6"/>
<dbReference type="STRING" id="471853.Bcav_3148"/>
<dbReference type="KEGG" id="bcv:Bcav_3148"/>
<dbReference type="eggNOG" id="COG0048">
    <property type="taxonomic scope" value="Bacteria"/>
</dbReference>
<dbReference type="HOGENOM" id="CLU_104295_1_2_11"/>
<dbReference type="OrthoDB" id="9802366at2"/>
<dbReference type="Proteomes" id="UP000007962">
    <property type="component" value="Chromosome"/>
</dbReference>
<dbReference type="GO" id="GO:0015935">
    <property type="term" value="C:small ribosomal subunit"/>
    <property type="evidence" value="ECO:0007669"/>
    <property type="project" value="InterPro"/>
</dbReference>
<dbReference type="GO" id="GO:0019843">
    <property type="term" value="F:rRNA binding"/>
    <property type="evidence" value="ECO:0007669"/>
    <property type="project" value="UniProtKB-UniRule"/>
</dbReference>
<dbReference type="GO" id="GO:0003735">
    <property type="term" value="F:structural constituent of ribosome"/>
    <property type="evidence" value="ECO:0007669"/>
    <property type="project" value="InterPro"/>
</dbReference>
<dbReference type="GO" id="GO:0000049">
    <property type="term" value="F:tRNA binding"/>
    <property type="evidence" value="ECO:0007669"/>
    <property type="project" value="UniProtKB-UniRule"/>
</dbReference>
<dbReference type="GO" id="GO:0006412">
    <property type="term" value="P:translation"/>
    <property type="evidence" value="ECO:0007669"/>
    <property type="project" value="UniProtKB-UniRule"/>
</dbReference>
<dbReference type="CDD" id="cd03368">
    <property type="entry name" value="Ribosomal_S12"/>
    <property type="match status" value="1"/>
</dbReference>
<dbReference type="FunFam" id="2.40.50.140:FF:000001">
    <property type="entry name" value="30S ribosomal protein S12"/>
    <property type="match status" value="1"/>
</dbReference>
<dbReference type="Gene3D" id="2.40.50.140">
    <property type="entry name" value="Nucleic acid-binding proteins"/>
    <property type="match status" value="1"/>
</dbReference>
<dbReference type="HAMAP" id="MF_00403_B">
    <property type="entry name" value="Ribosomal_uS12_B"/>
    <property type="match status" value="1"/>
</dbReference>
<dbReference type="InterPro" id="IPR012340">
    <property type="entry name" value="NA-bd_OB-fold"/>
</dbReference>
<dbReference type="InterPro" id="IPR006032">
    <property type="entry name" value="Ribosomal_uS12"/>
</dbReference>
<dbReference type="InterPro" id="IPR005679">
    <property type="entry name" value="Ribosomal_uS12_bac"/>
</dbReference>
<dbReference type="NCBIfam" id="TIGR00981">
    <property type="entry name" value="rpsL_bact"/>
    <property type="match status" value="1"/>
</dbReference>
<dbReference type="PANTHER" id="PTHR11652">
    <property type="entry name" value="30S RIBOSOMAL PROTEIN S12 FAMILY MEMBER"/>
    <property type="match status" value="1"/>
</dbReference>
<dbReference type="Pfam" id="PF00164">
    <property type="entry name" value="Ribosom_S12_S23"/>
    <property type="match status" value="1"/>
</dbReference>
<dbReference type="PIRSF" id="PIRSF002133">
    <property type="entry name" value="Ribosomal_S12/S23"/>
    <property type="match status" value="1"/>
</dbReference>
<dbReference type="PRINTS" id="PR01034">
    <property type="entry name" value="RIBOSOMALS12"/>
</dbReference>
<dbReference type="SUPFAM" id="SSF50249">
    <property type="entry name" value="Nucleic acid-binding proteins"/>
    <property type="match status" value="1"/>
</dbReference>
<dbReference type="PROSITE" id="PS00055">
    <property type="entry name" value="RIBOSOMAL_S12"/>
    <property type="match status" value="1"/>
</dbReference>
<name>RS12_BEUC1</name>
<keyword id="KW-0488">Methylation</keyword>
<keyword id="KW-1185">Reference proteome</keyword>
<keyword id="KW-0687">Ribonucleoprotein</keyword>
<keyword id="KW-0689">Ribosomal protein</keyword>
<keyword id="KW-0694">RNA-binding</keyword>
<keyword id="KW-0699">rRNA-binding</keyword>
<keyword id="KW-0820">tRNA-binding</keyword>
<evidence type="ECO:0000250" key="1"/>
<evidence type="ECO:0000255" key="2">
    <source>
        <dbReference type="HAMAP-Rule" id="MF_00403"/>
    </source>
</evidence>
<evidence type="ECO:0000256" key="3">
    <source>
        <dbReference type="SAM" id="MobiDB-lite"/>
    </source>
</evidence>
<evidence type="ECO:0000305" key="4"/>
<reference key="1">
    <citation type="journal article" date="2009" name="Stand. Genomic Sci.">
        <title>Complete genome sequence of Beutenbergia cavernae type strain (HKI 0122).</title>
        <authorList>
            <person name="Land M."/>
            <person name="Pukall R."/>
            <person name="Abt B."/>
            <person name="Goker M."/>
            <person name="Rohde M."/>
            <person name="Glavina Del Rio T."/>
            <person name="Tice H."/>
            <person name="Copeland A."/>
            <person name="Cheng J.F."/>
            <person name="Lucas S."/>
            <person name="Chen F."/>
            <person name="Nolan M."/>
            <person name="Bruce D."/>
            <person name="Goodwin L."/>
            <person name="Pitluck S."/>
            <person name="Ivanova N."/>
            <person name="Mavromatis K."/>
            <person name="Ovchinnikova G."/>
            <person name="Pati A."/>
            <person name="Chen A."/>
            <person name="Palaniappan K."/>
            <person name="Hauser L."/>
            <person name="Chang Y.J."/>
            <person name="Jefferies C.C."/>
            <person name="Saunders E."/>
            <person name="Brettin T."/>
            <person name="Detter J.C."/>
            <person name="Han C."/>
            <person name="Chain P."/>
            <person name="Bristow J."/>
            <person name="Eisen J.A."/>
            <person name="Markowitz V."/>
            <person name="Hugenholtz P."/>
            <person name="Kyrpides N.C."/>
            <person name="Klenk H.P."/>
            <person name="Lapidus A."/>
        </authorList>
    </citation>
    <scope>NUCLEOTIDE SEQUENCE [LARGE SCALE GENOMIC DNA]</scope>
    <source>
        <strain>ATCC BAA-8 / DSM 12333 / CCUG 43141 / JCM 11478 / NBRC 16432 / NCIMB 13614 / HKI 0122</strain>
    </source>
</reference>
<organism>
    <name type="scientific">Beutenbergia cavernae (strain ATCC BAA-8 / DSM 12333 / CCUG 43141 / JCM 11478 / NBRC 16432 / NCIMB 13614 / HKI 0122)</name>
    <dbReference type="NCBI Taxonomy" id="471853"/>
    <lineage>
        <taxon>Bacteria</taxon>
        <taxon>Bacillati</taxon>
        <taxon>Actinomycetota</taxon>
        <taxon>Actinomycetes</taxon>
        <taxon>Micrococcales</taxon>
        <taxon>Beutenbergiaceae</taxon>
        <taxon>Beutenbergia</taxon>
    </lineage>
</organism>
<gene>
    <name evidence="2" type="primary">rpsL</name>
    <name type="ordered locus">Bcav_3148</name>
</gene>
<comment type="function">
    <text evidence="2">With S4 and S5 plays an important role in translational accuracy.</text>
</comment>
<comment type="function">
    <text evidence="2">Interacts with and stabilizes bases of the 16S rRNA that are involved in tRNA selection in the A site and with the mRNA backbone. Located at the interface of the 30S and 50S subunits, it traverses the body of the 30S subunit contacting proteins on the other side and probably holding the rRNA structure together. The combined cluster of proteins S8, S12 and S17 appears to hold together the shoulder and platform of the 30S subunit.</text>
</comment>
<comment type="subunit">
    <text evidence="2">Part of the 30S ribosomal subunit. Contacts proteins S8 and S17. May interact with IF1 in the 30S initiation complex.</text>
</comment>
<comment type="similarity">
    <text evidence="2">Belongs to the universal ribosomal protein uS12 family.</text>
</comment>